<reference key="1">
    <citation type="journal article" date="1998" name="Nature">
        <title>Deciphering the biology of Mycobacterium tuberculosis from the complete genome sequence.</title>
        <authorList>
            <person name="Cole S.T."/>
            <person name="Brosch R."/>
            <person name="Parkhill J."/>
            <person name="Garnier T."/>
            <person name="Churcher C.M."/>
            <person name="Harris D.E."/>
            <person name="Gordon S.V."/>
            <person name="Eiglmeier K."/>
            <person name="Gas S."/>
            <person name="Barry C.E. III"/>
            <person name="Tekaia F."/>
            <person name="Badcock K."/>
            <person name="Basham D."/>
            <person name="Brown D."/>
            <person name="Chillingworth T."/>
            <person name="Connor R."/>
            <person name="Davies R.M."/>
            <person name="Devlin K."/>
            <person name="Feltwell T."/>
            <person name="Gentles S."/>
            <person name="Hamlin N."/>
            <person name="Holroyd S."/>
            <person name="Hornsby T."/>
            <person name="Jagels K."/>
            <person name="Krogh A."/>
            <person name="McLean J."/>
            <person name="Moule S."/>
            <person name="Murphy L.D."/>
            <person name="Oliver S."/>
            <person name="Osborne J."/>
            <person name="Quail M.A."/>
            <person name="Rajandream M.A."/>
            <person name="Rogers J."/>
            <person name="Rutter S."/>
            <person name="Seeger K."/>
            <person name="Skelton S."/>
            <person name="Squares S."/>
            <person name="Squares R."/>
            <person name="Sulston J.E."/>
            <person name="Taylor K."/>
            <person name="Whitehead S."/>
            <person name="Barrell B.G."/>
        </authorList>
    </citation>
    <scope>NUCLEOTIDE SEQUENCE [LARGE SCALE GENOMIC DNA]</scope>
    <source>
        <strain>ATCC 25618 / H37Rv</strain>
    </source>
</reference>
<reference key="2">
    <citation type="journal article" date="2009" name="PLoS Genet.">
        <title>Comprehensive functional analysis of Mycobacterium tuberculosis toxin-antitoxin systems: implications for pathogenesis, stress responses, and evolution.</title>
        <authorList>
            <person name="Ramage H.R."/>
            <person name="Connolly L.E."/>
            <person name="Cox J.S."/>
        </authorList>
    </citation>
    <scope>EXPRESSION IN M.SMEGMATIS</scope>
    <scope>FUNCTION AS AN ANTITOXIN</scope>
    <source>
        <strain>ATCC 35801 / TMC 107 / Erdman</strain>
    </source>
</reference>
<sequence length="86" mass="9918">MRTTLTLDDDVVRLVEDAVHRERRPMKQVINDALRRALAPPVKRQEQYRLEPHESAVRSGLDLAGFNKLADELEDEALLDATRRAR</sequence>
<accession>O50456</accession>
<accession>L0T6A4</accession>
<protein>
    <recommendedName>
        <fullName>Antitoxin VapB33</fullName>
    </recommendedName>
</protein>
<organism>
    <name type="scientific">Mycobacterium tuberculosis (strain ATCC 25618 / H37Rv)</name>
    <dbReference type="NCBI Taxonomy" id="83332"/>
    <lineage>
        <taxon>Bacteria</taxon>
        <taxon>Bacillati</taxon>
        <taxon>Actinomycetota</taxon>
        <taxon>Actinomycetes</taxon>
        <taxon>Mycobacteriales</taxon>
        <taxon>Mycobacteriaceae</taxon>
        <taxon>Mycobacterium</taxon>
        <taxon>Mycobacterium tuberculosis complex</taxon>
    </lineage>
</organism>
<keyword id="KW-1185">Reference proteome</keyword>
<keyword id="KW-1277">Toxin-antitoxin system</keyword>
<comment type="function">
    <text evidence="1">Antitoxin component of a type II toxin-antitoxin (TA) system. Upon expression in M.smegmatis neutralizes the effect of cognate toxin VapC33.</text>
</comment>
<evidence type="ECO:0000269" key="1">
    <source>
    </source>
</evidence>
<dbReference type="EMBL" id="AL123456">
    <property type="protein sequence ID" value="CCP43997.1"/>
    <property type="molecule type" value="Genomic_DNA"/>
</dbReference>
<dbReference type="PIR" id="H70952">
    <property type="entry name" value="H70952"/>
</dbReference>
<dbReference type="RefSeq" id="NP_215757.1">
    <property type="nucleotide sequence ID" value="NC_000962.3"/>
</dbReference>
<dbReference type="RefSeq" id="WP_003406302.1">
    <property type="nucleotide sequence ID" value="NZ_NVQJ01000039.1"/>
</dbReference>
<dbReference type="SMR" id="O50456"/>
<dbReference type="STRING" id="83332.Rv1241"/>
<dbReference type="PaxDb" id="83332-Rv1241"/>
<dbReference type="DNASU" id="887118"/>
<dbReference type="GeneID" id="45425211"/>
<dbReference type="GeneID" id="887118"/>
<dbReference type="KEGG" id="mtu:Rv1241"/>
<dbReference type="KEGG" id="mtv:RVBD_1241"/>
<dbReference type="TubercuList" id="Rv1241"/>
<dbReference type="eggNOG" id="ENOG5033HGU">
    <property type="taxonomic scope" value="Bacteria"/>
</dbReference>
<dbReference type="InParanoid" id="O50456"/>
<dbReference type="OrthoDB" id="9813767at2"/>
<dbReference type="PhylomeDB" id="O50456"/>
<dbReference type="Proteomes" id="UP000001584">
    <property type="component" value="Chromosome"/>
</dbReference>
<dbReference type="GO" id="GO:0045927">
    <property type="term" value="P:positive regulation of growth"/>
    <property type="evidence" value="ECO:0000315"/>
    <property type="project" value="MTBBASE"/>
</dbReference>
<gene>
    <name type="primary">vapB33</name>
    <name type="ordered locus">Rv1241</name>
</gene>
<name>VPB33_MYCTU</name>
<proteinExistence type="evidence at protein level"/>
<feature type="chain" id="PRO_0000408077" description="Antitoxin VapB33">
    <location>
        <begin position="1"/>
        <end position="86"/>
    </location>
</feature>